<sequence>MDNFFMTWLLPLFIVVGKTLLLLTVLLVLIAYLLYADRKIWAAVQLRRGPNVVGPWGLLQSFADLIKFVVKEPIIPSGANKGVFLLAPFVSATLALSAWAVVPVNEGWEIASINVGLLYILAISSLEVYGVIMGGWASNSKYPFLGALRSAAQMVSYEVSIGFVLVTVILVSGSLDLTTIVQEQNKGLGTYLGLPFSSLLDWNWLILFPMFIIFFISALAETNRPPFDLVEAESELVAGHMVEYSSTPYMLFFLGEYVAIVLMCALTTILFLGGWLPPLDVWWLNWVPGVIWFVLKVCFVFFWFAMVKAFVPRYRYDQLMRLGWKVFLPISLAMVVITAAILKYTSFA</sequence>
<keyword id="KW-0997">Cell inner membrane</keyword>
<keyword id="KW-1003">Cell membrane</keyword>
<keyword id="KW-0472">Membrane</keyword>
<keyword id="KW-0520">NAD</keyword>
<keyword id="KW-0874">Quinone</keyword>
<keyword id="KW-1278">Translocase</keyword>
<keyword id="KW-0812">Transmembrane</keyword>
<keyword id="KW-1133">Transmembrane helix</keyword>
<keyword id="KW-0830">Ubiquinone</keyword>
<name>NUOH_BARBK</name>
<feature type="chain" id="PRO_0000298794" description="NADH-quinone oxidoreductase subunit H">
    <location>
        <begin position="1"/>
        <end position="348"/>
    </location>
</feature>
<feature type="transmembrane region" description="Helical" evidence="1">
    <location>
        <begin position="10"/>
        <end position="30"/>
    </location>
</feature>
<feature type="transmembrane region" description="Helical" evidence="1">
    <location>
        <begin position="82"/>
        <end position="102"/>
    </location>
</feature>
<feature type="transmembrane region" description="Helical" evidence="1">
    <location>
        <begin position="115"/>
        <end position="135"/>
    </location>
</feature>
<feature type="transmembrane region" description="Helical" evidence="1">
    <location>
        <begin position="161"/>
        <end position="181"/>
    </location>
</feature>
<feature type="transmembrane region" description="Helical" evidence="1">
    <location>
        <begin position="199"/>
        <end position="219"/>
    </location>
</feature>
<feature type="transmembrane region" description="Helical" evidence="1">
    <location>
        <begin position="251"/>
        <end position="271"/>
    </location>
</feature>
<feature type="transmembrane region" description="Helical" evidence="1">
    <location>
        <begin position="287"/>
        <end position="307"/>
    </location>
</feature>
<feature type="transmembrane region" description="Helical" evidence="1">
    <location>
        <begin position="322"/>
        <end position="342"/>
    </location>
</feature>
<organism>
    <name type="scientific">Bartonella bacilliformis (strain ATCC 35685 / KC583 / Herrer 020/F12,63)</name>
    <dbReference type="NCBI Taxonomy" id="360095"/>
    <lineage>
        <taxon>Bacteria</taxon>
        <taxon>Pseudomonadati</taxon>
        <taxon>Pseudomonadota</taxon>
        <taxon>Alphaproteobacteria</taxon>
        <taxon>Hyphomicrobiales</taxon>
        <taxon>Bartonellaceae</taxon>
        <taxon>Bartonella</taxon>
    </lineage>
</organism>
<accession>A1USX4</accession>
<comment type="function">
    <text evidence="1">NDH-1 shuttles electrons from NADH, via FMN and iron-sulfur (Fe-S) centers, to quinones in the respiratory chain. The immediate electron acceptor for the enzyme in this species is believed to be ubiquinone. Couples the redox reaction to proton translocation (for every two electrons transferred, four hydrogen ions are translocated across the cytoplasmic membrane), and thus conserves the redox energy in a proton gradient. This subunit may bind ubiquinone.</text>
</comment>
<comment type="catalytic activity">
    <reaction evidence="1">
        <text>a quinone + NADH + 5 H(+)(in) = a quinol + NAD(+) + 4 H(+)(out)</text>
        <dbReference type="Rhea" id="RHEA:57888"/>
        <dbReference type="ChEBI" id="CHEBI:15378"/>
        <dbReference type="ChEBI" id="CHEBI:24646"/>
        <dbReference type="ChEBI" id="CHEBI:57540"/>
        <dbReference type="ChEBI" id="CHEBI:57945"/>
        <dbReference type="ChEBI" id="CHEBI:132124"/>
    </reaction>
</comment>
<comment type="subunit">
    <text evidence="1">NDH-1 is composed of 14 different subunits. Subunits NuoA, H, J, K, L, M, N constitute the membrane sector of the complex.</text>
</comment>
<comment type="subcellular location">
    <subcellularLocation>
        <location evidence="1">Cell inner membrane</location>
        <topology evidence="1">Multi-pass membrane protein</topology>
    </subcellularLocation>
</comment>
<comment type="similarity">
    <text evidence="1">Belongs to the complex I subunit 1 family.</text>
</comment>
<reference key="1">
    <citation type="submission" date="2006-12" db="EMBL/GenBank/DDBJ databases">
        <authorList>
            <person name="Hendrix L."/>
            <person name="Mohamoud Y."/>
            <person name="Radune D."/>
            <person name="Shvartsbeyn A."/>
            <person name="Daugherty S."/>
            <person name="Dodson R."/>
            <person name="Durkin A.S."/>
            <person name="Harkins D."/>
            <person name="Huot H."/>
            <person name="Kothari S.P."/>
            <person name="Madupu R."/>
            <person name="Li J."/>
            <person name="Nelson W.C."/>
            <person name="Shrivastava S."/>
            <person name="Giglio M.G."/>
            <person name="Haft D."/>
            <person name="Selengut J."/>
            <person name="Fraser-Ligget C."/>
            <person name="Seshadri R."/>
        </authorList>
    </citation>
    <scope>NUCLEOTIDE SEQUENCE [LARGE SCALE GENOMIC DNA]</scope>
    <source>
        <strain>ATCC 35685 / KC583 / Herrer 020/F12,63</strain>
    </source>
</reference>
<protein>
    <recommendedName>
        <fullName evidence="1">NADH-quinone oxidoreductase subunit H</fullName>
        <ecNumber evidence="1">7.1.1.-</ecNumber>
    </recommendedName>
    <alternativeName>
        <fullName evidence="1">NADH dehydrogenase I subunit H</fullName>
    </alternativeName>
    <alternativeName>
        <fullName evidence="1">NDH-1 subunit H</fullName>
    </alternativeName>
</protein>
<gene>
    <name evidence="1" type="primary">nuoH</name>
    <name type="ordered locus">BARBAKC583_0785</name>
</gene>
<proteinExistence type="inferred from homology"/>
<evidence type="ECO:0000255" key="1">
    <source>
        <dbReference type="HAMAP-Rule" id="MF_01350"/>
    </source>
</evidence>
<dbReference type="EC" id="7.1.1.-" evidence="1"/>
<dbReference type="EMBL" id="CP000524">
    <property type="protein sequence ID" value="ABM45247.1"/>
    <property type="molecule type" value="Genomic_DNA"/>
</dbReference>
<dbReference type="RefSeq" id="WP_005767074.1">
    <property type="nucleotide sequence ID" value="NC_008783.1"/>
</dbReference>
<dbReference type="SMR" id="A1USX4"/>
<dbReference type="STRING" id="360095.BARBAKC583_0785"/>
<dbReference type="GeneID" id="4685028"/>
<dbReference type="KEGG" id="bbk:BARBAKC583_0785"/>
<dbReference type="PATRIC" id="fig|360095.6.peg.758"/>
<dbReference type="eggNOG" id="COG1005">
    <property type="taxonomic scope" value="Bacteria"/>
</dbReference>
<dbReference type="HOGENOM" id="CLU_015134_0_1_5"/>
<dbReference type="OrthoDB" id="9803734at2"/>
<dbReference type="Proteomes" id="UP000000643">
    <property type="component" value="Chromosome"/>
</dbReference>
<dbReference type="GO" id="GO:0005886">
    <property type="term" value="C:plasma membrane"/>
    <property type="evidence" value="ECO:0007669"/>
    <property type="project" value="UniProtKB-SubCell"/>
</dbReference>
<dbReference type="GO" id="GO:0003954">
    <property type="term" value="F:NADH dehydrogenase activity"/>
    <property type="evidence" value="ECO:0007669"/>
    <property type="project" value="TreeGrafter"/>
</dbReference>
<dbReference type="GO" id="GO:0016655">
    <property type="term" value="F:oxidoreductase activity, acting on NAD(P)H, quinone or similar compound as acceptor"/>
    <property type="evidence" value="ECO:0007669"/>
    <property type="project" value="UniProtKB-UniRule"/>
</dbReference>
<dbReference type="GO" id="GO:0048038">
    <property type="term" value="F:quinone binding"/>
    <property type="evidence" value="ECO:0007669"/>
    <property type="project" value="UniProtKB-KW"/>
</dbReference>
<dbReference type="GO" id="GO:0009060">
    <property type="term" value="P:aerobic respiration"/>
    <property type="evidence" value="ECO:0007669"/>
    <property type="project" value="TreeGrafter"/>
</dbReference>
<dbReference type="HAMAP" id="MF_01350">
    <property type="entry name" value="NDH1_NuoH"/>
    <property type="match status" value="1"/>
</dbReference>
<dbReference type="InterPro" id="IPR001694">
    <property type="entry name" value="NADH_UbQ_OxRdtase_su1/FPO"/>
</dbReference>
<dbReference type="InterPro" id="IPR018086">
    <property type="entry name" value="NADH_UbQ_OxRdtase_su1_CS"/>
</dbReference>
<dbReference type="NCBIfam" id="NF004741">
    <property type="entry name" value="PRK06076.1-2"/>
    <property type="match status" value="1"/>
</dbReference>
<dbReference type="NCBIfam" id="NF004745">
    <property type="entry name" value="PRK06076.1-6"/>
    <property type="match status" value="1"/>
</dbReference>
<dbReference type="PANTHER" id="PTHR11432">
    <property type="entry name" value="NADH DEHYDROGENASE SUBUNIT 1"/>
    <property type="match status" value="1"/>
</dbReference>
<dbReference type="PANTHER" id="PTHR11432:SF3">
    <property type="entry name" value="NADH-UBIQUINONE OXIDOREDUCTASE CHAIN 1"/>
    <property type="match status" value="1"/>
</dbReference>
<dbReference type="Pfam" id="PF00146">
    <property type="entry name" value="NADHdh"/>
    <property type="match status" value="1"/>
</dbReference>
<dbReference type="PROSITE" id="PS00668">
    <property type="entry name" value="COMPLEX1_ND1_2"/>
    <property type="match status" value="1"/>
</dbReference>